<comment type="function">
    <text evidence="1">This protein is one of the early assembly proteins of the 50S ribosomal subunit, although it is not seen to bind rRNA by itself. It is important during the early stages of 50S assembly.</text>
</comment>
<comment type="subunit">
    <text evidence="1">Part of the 50S ribosomal subunit.</text>
</comment>
<comment type="similarity">
    <text evidence="1">Belongs to the universal ribosomal protein uL13 family.</text>
</comment>
<comment type="sequence caution" evidence="2">
    <conflict type="erroneous initiation">
        <sequence resource="EMBL-CDS" id="AAT41968"/>
    </conflict>
</comment>
<proteinExistence type="inferred from homology"/>
<accession>Q6H001</accession>
<evidence type="ECO:0000255" key="1">
    <source>
        <dbReference type="HAMAP-Rule" id="MF_01366"/>
    </source>
</evidence>
<evidence type="ECO:0000305" key="2"/>
<protein>
    <recommendedName>
        <fullName evidence="1">Large ribosomal subunit protein uL13</fullName>
    </recommendedName>
    <alternativeName>
        <fullName evidence="2">50S ribosomal protein L13</fullName>
    </alternativeName>
</protein>
<keyword id="KW-0687">Ribonucleoprotein</keyword>
<keyword id="KW-0689">Ribosomal protein</keyword>
<feature type="chain" id="PRO_0000261727" description="Large ribosomal subunit protein uL13">
    <location>
        <begin position="1"/>
        <end position="151"/>
    </location>
</feature>
<organism>
    <name type="scientific">Microchaete diplosiphon</name>
    <name type="common">Fremyella diplosiphon</name>
    <dbReference type="NCBI Taxonomy" id="1197"/>
    <lineage>
        <taxon>Bacteria</taxon>
        <taxon>Bacillati</taxon>
        <taxon>Cyanobacteriota</taxon>
        <taxon>Cyanophyceae</taxon>
        <taxon>Nostocales</taxon>
        <taxon>Rivulariaceae</taxon>
        <taxon>Microchaete</taxon>
    </lineage>
</organism>
<gene>
    <name evidence="1" type="primary">rplM</name>
    <name evidence="1" type="synonym">rpl13</name>
</gene>
<dbReference type="EMBL" id="AY548459">
    <property type="protein sequence ID" value="AAT41968.1"/>
    <property type="status" value="ALT_INIT"/>
    <property type="molecule type" value="Genomic_DNA"/>
</dbReference>
<dbReference type="SMR" id="Q6H001"/>
<dbReference type="GO" id="GO:0022625">
    <property type="term" value="C:cytosolic large ribosomal subunit"/>
    <property type="evidence" value="ECO:0007669"/>
    <property type="project" value="TreeGrafter"/>
</dbReference>
<dbReference type="GO" id="GO:0003729">
    <property type="term" value="F:mRNA binding"/>
    <property type="evidence" value="ECO:0007669"/>
    <property type="project" value="TreeGrafter"/>
</dbReference>
<dbReference type="GO" id="GO:0003735">
    <property type="term" value="F:structural constituent of ribosome"/>
    <property type="evidence" value="ECO:0007669"/>
    <property type="project" value="InterPro"/>
</dbReference>
<dbReference type="GO" id="GO:0017148">
    <property type="term" value="P:negative regulation of translation"/>
    <property type="evidence" value="ECO:0007669"/>
    <property type="project" value="TreeGrafter"/>
</dbReference>
<dbReference type="GO" id="GO:0006412">
    <property type="term" value="P:translation"/>
    <property type="evidence" value="ECO:0007669"/>
    <property type="project" value="UniProtKB-UniRule"/>
</dbReference>
<dbReference type="CDD" id="cd00392">
    <property type="entry name" value="Ribosomal_L13"/>
    <property type="match status" value="1"/>
</dbReference>
<dbReference type="FunFam" id="3.90.1180.10:FF:000001">
    <property type="entry name" value="50S ribosomal protein L13"/>
    <property type="match status" value="1"/>
</dbReference>
<dbReference type="Gene3D" id="3.90.1180.10">
    <property type="entry name" value="Ribosomal protein L13"/>
    <property type="match status" value="1"/>
</dbReference>
<dbReference type="HAMAP" id="MF_01366">
    <property type="entry name" value="Ribosomal_uL13"/>
    <property type="match status" value="1"/>
</dbReference>
<dbReference type="InterPro" id="IPR005822">
    <property type="entry name" value="Ribosomal_uL13"/>
</dbReference>
<dbReference type="InterPro" id="IPR005823">
    <property type="entry name" value="Ribosomal_uL13_bac-type"/>
</dbReference>
<dbReference type="InterPro" id="IPR023563">
    <property type="entry name" value="Ribosomal_uL13_CS"/>
</dbReference>
<dbReference type="InterPro" id="IPR036899">
    <property type="entry name" value="Ribosomal_uL13_sf"/>
</dbReference>
<dbReference type="NCBIfam" id="TIGR01066">
    <property type="entry name" value="rplM_bact"/>
    <property type="match status" value="1"/>
</dbReference>
<dbReference type="PANTHER" id="PTHR11545:SF2">
    <property type="entry name" value="LARGE RIBOSOMAL SUBUNIT PROTEIN UL13M"/>
    <property type="match status" value="1"/>
</dbReference>
<dbReference type="PANTHER" id="PTHR11545">
    <property type="entry name" value="RIBOSOMAL PROTEIN L13"/>
    <property type="match status" value="1"/>
</dbReference>
<dbReference type="Pfam" id="PF00572">
    <property type="entry name" value="Ribosomal_L13"/>
    <property type="match status" value="1"/>
</dbReference>
<dbReference type="PIRSF" id="PIRSF002181">
    <property type="entry name" value="Ribosomal_L13"/>
    <property type="match status" value="1"/>
</dbReference>
<dbReference type="SUPFAM" id="SSF52161">
    <property type="entry name" value="Ribosomal protein L13"/>
    <property type="match status" value="1"/>
</dbReference>
<dbReference type="PROSITE" id="PS00783">
    <property type="entry name" value="RIBOSOMAL_L13"/>
    <property type="match status" value="1"/>
</dbReference>
<sequence length="151" mass="17000">MTKTYLPPQDALEREWYIVDATDQRLGRLASEIAMVLRGKKKAEYTPHLDTGDFVIVINAEKIAVTGKKRTQKLYRRHSGRPGGMKTETFAKLQQRIPERIVEHAVKGMLPKNSLGKQLFTKLKVYAGPTHPHAAQKPKELKVNTIPGAES</sequence>
<reference key="1">
    <citation type="journal article" date="2004" name="J. Bacteriol.">
        <title>Genomic DNA microarray analysis: identification of new genes regulated by light color in the cyanobacterium Fremyella diplosiphon.</title>
        <authorList>
            <person name="Stowe-Evans E.L."/>
            <person name="Ford J."/>
            <person name="Kehoe D.M."/>
        </authorList>
    </citation>
    <scope>NUCLEOTIDE SEQUENCE [GENOMIC DNA]</scope>
    <source>
        <strain>FD33</strain>
    </source>
</reference>
<name>RL13_MICDP</name>